<feature type="chain" id="PRO_0000077715" description="Prophage excisionase-like protein">
    <location>
        <begin position="1"/>
        <end position="81"/>
    </location>
</feature>
<dbReference type="EMBL" id="U00096">
    <property type="protein sequence ID" value="AAC74225.1"/>
    <property type="molecule type" value="Genomic_DNA"/>
</dbReference>
<dbReference type="EMBL" id="AP009048">
    <property type="protein sequence ID" value="BAA35970.1"/>
    <property type="molecule type" value="Genomic_DNA"/>
</dbReference>
<dbReference type="PIR" id="B64859">
    <property type="entry name" value="B64859"/>
</dbReference>
<dbReference type="RefSeq" id="NP_415659.1">
    <property type="nucleotide sequence ID" value="NC_000913.3"/>
</dbReference>
<dbReference type="RefSeq" id="WP_000939945.1">
    <property type="nucleotide sequence ID" value="NZ_CP064683.1"/>
</dbReference>
<dbReference type="SMR" id="P75970"/>
<dbReference type="BioGRID" id="4261343">
    <property type="interactions" value="32"/>
</dbReference>
<dbReference type="FunCoup" id="P75970">
    <property type="interactions" value="388"/>
</dbReference>
<dbReference type="IntAct" id="P75970">
    <property type="interactions" value="25"/>
</dbReference>
<dbReference type="STRING" id="511145.b1141"/>
<dbReference type="PaxDb" id="511145-b1141"/>
<dbReference type="EnsemblBacteria" id="AAC74225">
    <property type="protein sequence ID" value="AAC74225"/>
    <property type="gene ID" value="b1141"/>
</dbReference>
<dbReference type="GeneID" id="945705"/>
<dbReference type="KEGG" id="ecj:JW1127"/>
<dbReference type="KEGG" id="eco:b1141"/>
<dbReference type="PATRIC" id="fig|83333.103.peg.1931"/>
<dbReference type="EchoBASE" id="EB3995"/>
<dbReference type="eggNOG" id="ENOG5032V4N">
    <property type="taxonomic scope" value="Bacteria"/>
</dbReference>
<dbReference type="HOGENOM" id="CLU_167463_2_0_6"/>
<dbReference type="InParanoid" id="P75970"/>
<dbReference type="OMA" id="EWASERY"/>
<dbReference type="BioCyc" id="EcoCyc:G6585-MONOMER"/>
<dbReference type="PRO" id="PR:P75970"/>
<dbReference type="Proteomes" id="UP000000625">
    <property type="component" value="Chromosome"/>
</dbReference>
<dbReference type="GO" id="GO:0003677">
    <property type="term" value="F:DNA binding"/>
    <property type="evidence" value="ECO:0007669"/>
    <property type="project" value="UniProtKB-KW"/>
</dbReference>
<dbReference type="GO" id="GO:0006310">
    <property type="term" value="P:DNA recombination"/>
    <property type="evidence" value="ECO:0007669"/>
    <property type="project" value="UniProtKB-KW"/>
</dbReference>
<dbReference type="Gene3D" id="1.10.1660.20">
    <property type="match status" value="1"/>
</dbReference>
<dbReference type="InterPro" id="IPR009061">
    <property type="entry name" value="DNA-bd_dom_put_sf"/>
</dbReference>
<dbReference type="InterPro" id="IPR012884">
    <property type="entry name" value="Excisionase-like"/>
</dbReference>
<dbReference type="InterPro" id="IPR038137">
    <property type="entry name" value="Excisionase-like_sf"/>
</dbReference>
<dbReference type="Pfam" id="PF07825">
    <property type="entry name" value="Exc"/>
    <property type="match status" value="1"/>
</dbReference>
<dbReference type="SUPFAM" id="SSF46955">
    <property type="entry name" value="Putative DNA-binding domain"/>
    <property type="match status" value="1"/>
</dbReference>
<protein>
    <recommendedName>
        <fullName evidence="1">Prophage excisionase-like protein</fullName>
    </recommendedName>
    <alternativeName>
        <fullName>Excisionase-like protein from lambdoid prophage 14</fullName>
    </alternativeName>
</protein>
<keyword id="KW-0233">DNA recombination</keyword>
<keyword id="KW-0238">DNA-binding</keyword>
<keyword id="KW-1185">Reference proteome</keyword>
<sequence>MLQMLTLEEWAAEKYRSNPPSVSTLRRYAKQNLFCPPAMKQGRLWRVREDAELVGELVTPVIKKNDSLLLQRILSNGSQTA</sequence>
<accession>P75970</accession>
<proteinExistence type="predicted"/>
<comment type="similarity">
    <text evidence="1">To lambdoid phages excisionases.</text>
</comment>
<evidence type="ECO:0000305" key="1"/>
<reference key="1">
    <citation type="journal article" date="1996" name="DNA Res.">
        <title>A 718-kb DNA sequence of the Escherichia coli K-12 genome corresponding to the 12.7-28.0 min region on the linkage map.</title>
        <authorList>
            <person name="Oshima T."/>
            <person name="Aiba H."/>
            <person name="Baba T."/>
            <person name="Fujita K."/>
            <person name="Hayashi K."/>
            <person name="Honjo A."/>
            <person name="Ikemoto K."/>
            <person name="Inada T."/>
            <person name="Itoh T."/>
            <person name="Kajihara M."/>
            <person name="Kanai K."/>
            <person name="Kashimoto K."/>
            <person name="Kimura S."/>
            <person name="Kitagawa M."/>
            <person name="Makino K."/>
            <person name="Masuda S."/>
            <person name="Miki T."/>
            <person name="Mizobuchi K."/>
            <person name="Mori H."/>
            <person name="Motomura K."/>
            <person name="Nakamura Y."/>
            <person name="Nashimoto H."/>
            <person name="Nishio Y."/>
            <person name="Saito N."/>
            <person name="Sampei G."/>
            <person name="Seki Y."/>
            <person name="Tagami H."/>
            <person name="Takemoto K."/>
            <person name="Wada C."/>
            <person name="Yamamoto Y."/>
            <person name="Yano M."/>
            <person name="Horiuchi T."/>
        </authorList>
    </citation>
    <scope>NUCLEOTIDE SEQUENCE [LARGE SCALE GENOMIC DNA]</scope>
    <source>
        <strain>K12 / W3110 / ATCC 27325 / DSM 5911</strain>
    </source>
</reference>
<reference key="2">
    <citation type="journal article" date="1997" name="Science">
        <title>The complete genome sequence of Escherichia coli K-12.</title>
        <authorList>
            <person name="Blattner F.R."/>
            <person name="Plunkett G. III"/>
            <person name="Bloch C.A."/>
            <person name="Perna N.T."/>
            <person name="Burland V."/>
            <person name="Riley M."/>
            <person name="Collado-Vides J."/>
            <person name="Glasner J.D."/>
            <person name="Rode C.K."/>
            <person name="Mayhew G.F."/>
            <person name="Gregor J."/>
            <person name="Davis N.W."/>
            <person name="Kirkpatrick H.A."/>
            <person name="Goeden M.A."/>
            <person name="Rose D.J."/>
            <person name="Mau B."/>
            <person name="Shao Y."/>
        </authorList>
    </citation>
    <scope>NUCLEOTIDE SEQUENCE [LARGE SCALE GENOMIC DNA]</scope>
    <source>
        <strain>K12 / MG1655 / ATCC 47076</strain>
    </source>
</reference>
<reference key="3">
    <citation type="journal article" date="2006" name="Mol. Syst. Biol.">
        <title>Highly accurate genome sequences of Escherichia coli K-12 strains MG1655 and W3110.</title>
        <authorList>
            <person name="Hayashi K."/>
            <person name="Morooka N."/>
            <person name="Yamamoto Y."/>
            <person name="Fujita K."/>
            <person name="Isono K."/>
            <person name="Choi S."/>
            <person name="Ohtsubo E."/>
            <person name="Baba T."/>
            <person name="Wanner B.L."/>
            <person name="Mori H."/>
            <person name="Horiuchi T."/>
        </authorList>
    </citation>
    <scope>NUCLEOTIDE SEQUENCE [LARGE SCALE GENOMIC DNA]</scope>
    <source>
        <strain>K12 / W3110 / ATCC 27325 / DSM 5911</strain>
    </source>
</reference>
<organism>
    <name type="scientific">Escherichia coli (strain K12)</name>
    <dbReference type="NCBI Taxonomy" id="83333"/>
    <lineage>
        <taxon>Bacteria</taxon>
        <taxon>Pseudomonadati</taxon>
        <taxon>Pseudomonadota</taxon>
        <taxon>Gammaproteobacteria</taxon>
        <taxon>Enterobacterales</taxon>
        <taxon>Enterobacteriaceae</taxon>
        <taxon>Escherichia</taxon>
    </lineage>
</organism>
<gene>
    <name type="primary">xisE</name>
    <name type="synonym">vxis</name>
    <name type="synonym">ymfG</name>
    <name type="ordered locus">b1141</name>
    <name type="ordered locus">JW1127</name>
</gene>
<name>VXIS_ECOLI</name>